<protein>
    <recommendedName>
        <fullName>Antistasin</fullName>
        <shortName>ATS</shortName>
    </recommendedName>
    <alternativeName>
        <fullName>Blood coagulation factor Xa/proclotting enzyme inhibitor</fullName>
    </alternativeName>
</protein>
<organism>
    <name type="scientific">Haementeria officinalis</name>
    <name type="common">Mexican leech</name>
    <dbReference type="NCBI Taxonomy" id="6410"/>
    <lineage>
        <taxon>Eukaryota</taxon>
        <taxon>Metazoa</taxon>
        <taxon>Spiralia</taxon>
        <taxon>Lophotrochozoa</taxon>
        <taxon>Annelida</taxon>
        <taxon>Clitellata</taxon>
        <taxon>Hirudinea</taxon>
        <taxon>Rhynchobdellida</taxon>
        <taxon>Glossiphoniidae</taxon>
        <taxon>Haementeria</taxon>
    </lineage>
</organism>
<reference key="1">
    <citation type="journal article" date="1989" name="Gene">
        <title>Cloning and expression of cDNA encoding antistasin, a leech-derived protein having anti-coagulant and anti-metastatic properties.</title>
        <authorList>
            <person name="Han J.H."/>
            <person name="Law S.W."/>
            <person name="Keller P.M."/>
            <person name="Kniskern P.J."/>
            <person name="Silberklang M."/>
            <person name="Tung J.S."/>
            <person name="Gasic T.B."/>
            <person name="Gasic G.J."/>
            <person name="Friedman P.A."/>
            <person name="Ellis R.W."/>
        </authorList>
    </citation>
    <scope>NUCLEOTIDE SEQUENCE [MRNA]</scope>
</reference>
<reference key="2">
    <citation type="journal article" date="1988" name="J. Biol. Chem.">
        <title>The amino acid sequence of antistasin. A potent inhibitor of factor Xa reveals a repeated internal structure.</title>
        <authorList>
            <person name="Nutt E."/>
            <person name="Gasic T."/>
            <person name="Rodkey J."/>
            <person name="Gasic G.J."/>
            <person name="Jacobs J.W."/>
            <person name="Friedman P.A."/>
            <person name="Simpson E."/>
        </authorList>
    </citation>
    <scope>PROTEIN SEQUENCE OF 18-136</scope>
    <scope>PYROGLUTAMATE FORMATION AT GLN-18</scope>
    <source>
        <tissue>Saliva</tissue>
    </source>
</reference>
<reference key="3">
    <citation type="journal article" date="1993" name="Methods Enzymol.">
        <title>Purification and characterization of inhibitors of blood coagulation factor Xa from hematophagous organisms.</title>
        <authorList>
            <person name="Dunwiddie C.T."/>
            <person name="Waxman L."/>
            <person name="Vlasuk G.P."/>
            <person name="Friedman P.A."/>
        </authorList>
    </citation>
    <scope>PROTEIN SEQUENCE OF 18-136</scope>
    <source>
        <tissue>Saliva</tissue>
    </source>
</reference>
<reference key="4">
    <citation type="journal article" date="1989" name="J. Biol. Chem.">
        <title>Antistasin, a leech-derived inhibitor of factor Xa. Kinetic analysis of enzyme inhibition and identification of the reactive site.</title>
        <authorList>
            <person name="Dunwiddie C."/>
            <person name="Thornberry N.A."/>
            <person name="Bull H.G."/>
            <person name="Sardana M."/>
            <person name="Friedman P.A."/>
            <person name="Jacobs J.W."/>
            <person name="Simpson E."/>
        </authorList>
    </citation>
    <scope>REACTIVE SITE</scope>
</reference>
<reference key="5">
    <citation type="journal article" date="1989" name="J. Biol. Chem.">
        <title>Antistasin, an inhibitor of coagulation and metastasis, binds to sulfatide (Gal(3-SO4) beta 1-1Cer) and has a sequence homology with other proteins that bind sulfated glycoconjugates.</title>
        <authorList>
            <person name="Holt G.D."/>
            <person name="Krivan H.C."/>
            <person name="Gasic G.J."/>
            <person name="Ginsburg V."/>
        </authorList>
    </citation>
    <scope>SULFATIDE-BINDING</scope>
</reference>
<reference key="6">
    <citation type="journal article" date="1992" name="Biochem. J.">
        <title>Site-directed mutagenesis of the leech-derived factor Xa inhibitor antistasin. Probing of the reactive site.</title>
        <authorList>
            <person name="Hofmann K.J."/>
            <person name="Nutt E.M."/>
            <person name="Dunwiddie C."/>
        </authorList>
    </citation>
    <scope>MUTAGENESIS</scope>
</reference>
<reference key="7">
    <citation type="journal article" date="1994" name="Thromb. Res.">
        <title>Mutational analysis of antistasin, an inhibitor of blood coagulation factor Xa derived from the Mexican leech Haementeria officinalis.</title>
        <authorList>
            <person name="Theunissen H.J."/>
            <person name="Dijkema R."/>
            <person name="Swinkels J.C."/>
            <person name="de Poorter T.L."/>
            <person name="Vink P.M."/>
            <person name="van Dinther T.G."/>
        </authorList>
    </citation>
    <scope>MUTAGENESIS</scope>
</reference>
<reference key="8">
    <citation type="journal article" date="1997" name="EMBO J.">
        <title>X-ray structure of antistasin at 1.9-A resolution and its modelled complex with blood coagulation factor Xa.</title>
        <authorList>
            <person name="Lapatto R."/>
            <person name="Krengel U."/>
            <person name="Schreuder H.A."/>
            <person name="Arkema A."/>
            <person name="de Boer B."/>
            <person name="Kalk K.H."/>
            <person name="Hol W.G.J."/>
            <person name="Grootenhuis P.D.J."/>
            <person name="Mulders J.W.M."/>
            <person name="Dijkema R."/>
            <person name="Theunissen H.J.M."/>
            <person name="Dijkstra B.W."/>
        </authorList>
    </citation>
    <scope>X-RAY CRYSTALLOGRAPHY (1.9 ANGSTROMS) OF 24-127</scope>
</reference>
<sequence>MIKLAILLLFTVAIVRCQGPFGPGCEEAGCPEGSACNIITDRCTCSGVRCRMHCPHGFQRSRYGCEFCKCRLEPMKATCDISECPEGMMCSRLTNKCDCKIDINCRKTCPNGLKRDKLGCEYCECRPKRKLIPRLS</sequence>
<dbReference type="EMBL" id="M24422">
    <property type="protein sequence ID" value="AAA29192.1"/>
    <property type="molecule type" value="mRNA"/>
</dbReference>
<dbReference type="EMBL" id="M24423">
    <property type="protein sequence ID" value="AAA29193.1"/>
    <property type="molecule type" value="mRNA"/>
</dbReference>
<dbReference type="PIR" id="A28806">
    <property type="entry name" value="A28806"/>
</dbReference>
<dbReference type="PIR" id="A34398">
    <property type="entry name" value="A34398"/>
</dbReference>
<dbReference type="PIR" id="JS0209">
    <property type="entry name" value="JS0209"/>
</dbReference>
<dbReference type="PIR" id="S13904">
    <property type="entry name" value="S13904"/>
</dbReference>
<dbReference type="PDB" id="1SKZ">
    <property type="method" value="X-ray"/>
    <property type="resolution" value="1.90 A"/>
    <property type="chains" value="A=20-136"/>
</dbReference>
<dbReference type="PDBsum" id="1SKZ"/>
<dbReference type="SMR" id="P15358"/>
<dbReference type="MEROPS" id="I15.007"/>
<dbReference type="EvolutionaryTrace" id="P15358"/>
<dbReference type="GO" id="GO:0005576">
    <property type="term" value="C:extracellular region"/>
    <property type="evidence" value="ECO:0007669"/>
    <property type="project" value="UniProtKB-SubCell"/>
</dbReference>
<dbReference type="GO" id="GO:0008201">
    <property type="term" value="F:heparin binding"/>
    <property type="evidence" value="ECO:0007669"/>
    <property type="project" value="UniProtKB-KW"/>
</dbReference>
<dbReference type="GO" id="GO:0004867">
    <property type="term" value="F:serine-type endopeptidase inhibitor activity"/>
    <property type="evidence" value="ECO:0007669"/>
    <property type="project" value="UniProtKB-KW"/>
</dbReference>
<dbReference type="GO" id="GO:0050819">
    <property type="term" value="P:negative regulation of coagulation"/>
    <property type="evidence" value="ECO:0007669"/>
    <property type="project" value="InterPro"/>
</dbReference>
<dbReference type="Gene3D" id="2.10.22.10">
    <property type="entry name" value="Antistasin, domain 1"/>
    <property type="match status" value="2"/>
</dbReference>
<dbReference type="InterPro" id="IPR004094">
    <property type="entry name" value="Antistasin-like"/>
</dbReference>
<dbReference type="InterPro" id="IPR011061">
    <property type="entry name" value="Hirudin/antistatin"/>
</dbReference>
<dbReference type="InterPro" id="IPR008086">
    <property type="entry name" value="Prot_inh_I15_antistasin_leech"/>
</dbReference>
<dbReference type="Pfam" id="PF02822">
    <property type="entry name" value="Antistasin"/>
    <property type="match status" value="1"/>
</dbReference>
<dbReference type="PRINTS" id="PR01706">
    <property type="entry name" value="ANTISTASIN"/>
</dbReference>
<dbReference type="SUPFAM" id="SSF57262">
    <property type="entry name" value="Leech antihemostatic proteins"/>
    <property type="match status" value="2"/>
</dbReference>
<dbReference type="PROSITE" id="PS51252">
    <property type="entry name" value="ANTISTASIN"/>
    <property type="match status" value="2"/>
</dbReference>
<comment type="function">
    <text>This highly disulfide-bonded protein is a potent inhibitor of factor Xa. May have therapeutic utility as an anticoagulant. Also exhibits a strong metastatic activity.</text>
</comment>
<comment type="subcellular location">
    <subcellularLocation>
        <location>Secreted</location>
    </subcellularLocation>
</comment>
<comment type="miscellaneous">
    <text>Binds to heparin-agarose, binds to sulfated glycoconjugates.</text>
</comment>
<comment type="miscellaneous">
    <text>At least four isoforms of antistasin have been identified in leech salivary gland extracts, which differ by 1 or 2 amino-acid residues.</text>
</comment>
<comment type="similarity">
    <text evidence="5">Belongs to the protease inhibitor I15 (antistasin) family.</text>
</comment>
<proteinExistence type="evidence at protein level"/>
<accession>P15358</accession>
<accession>Q9TWQ8</accession>
<accession>Q9TX45</accession>
<name>ANTA_HAEOF</name>
<keyword id="KW-0002">3D-structure</keyword>
<keyword id="KW-0903">Direct protein sequencing</keyword>
<keyword id="KW-1015">Disulfide bond</keyword>
<keyword id="KW-0358">Heparin-binding</keyword>
<keyword id="KW-0646">Protease inhibitor</keyword>
<keyword id="KW-0873">Pyrrolidone carboxylic acid</keyword>
<keyword id="KW-0677">Repeat</keyword>
<keyword id="KW-0964">Secreted</keyword>
<keyword id="KW-0722">Serine protease inhibitor</keyword>
<keyword id="KW-0732">Signal</keyword>
<evidence type="ECO:0000255" key="1"/>
<evidence type="ECO:0000255" key="2">
    <source>
        <dbReference type="PROSITE-ProRule" id="PRU00582"/>
    </source>
</evidence>
<evidence type="ECO:0000269" key="3">
    <source>
    </source>
</evidence>
<evidence type="ECO:0000269" key="4">
    <source>
    </source>
</evidence>
<evidence type="ECO:0000305" key="5"/>
<evidence type="ECO:0007829" key="6">
    <source>
        <dbReference type="PDB" id="1SKZ"/>
    </source>
</evidence>
<feature type="signal peptide" evidence="3 4">
    <location>
        <begin position="1"/>
        <end position="17"/>
    </location>
</feature>
<feature type="chain" id="PRO_0000001700" description="Antistasin">
    <location>
        <begin position="18"/>
        <end position="136"/>
    </location>
</feature>
<feature type="domain" description="Antistasin-like 1" evidence="2">
    <location>
        <begin position="45"/>
        <end position="70"/>
    </location>
</feature>
<feature type="domain" description="Antistasin-like 2" evidence="2">
    <location>
        <begin position="100"/>
        <end position="125"/>
    </location>
</feature>
<feature type="binding site" evidence="1">
    <location>
        <begin position="114"/>
        <end position="117"/>
    </location>
    <ligand>
        <name>heparin</name>
        <dbReference type="ChEBI" id="CHEBI:28304"/>
    </ligand>
</feature>
<feature type="binding site" evidence="1">
    <location>
        <begin position="128"/>
        <end position="135"/>
    </location>
    <ligand>
        <name>heparin</name>
        <dbReference type="ChEBI" id="CHEBI:28304"/>
    </ligand>
</feature>
<feature type="site" description="Reactive bond">
    <location>
        <begin position="51"/>
        <end position="52"/>
    </location>
</feature>
<feature type="site" description="Reactive bond">
    <location>
        <begin position="106"/>
        <end position="107"/>
    </location>
</feature>
<feature type="modified residue" description="Pyrrolidone carboxylic acid" evidence="3">
    <location>
        <position position="18"/>
    </location>
</feature>
<feature type="disulfide bond">
    <location>
        <begin position="25"/>
        <end position="36"/>
    </location>
</feature>
<feature type="disulfide bond">
    <location>
        <begin position="30"/>
        <end position="43"/>
    </location>
</feature>
<feature type="disulfide bond">
    <location>
        <begin position="45"/>
        <end position="65"/>
    </location>
</feature>
<feature type="disulfide bond">
    <location>
        <begin position="50"/>
        <end position="68"/>
    </location>
</feature>
<feature type="disulfide bond">
    <location>
        <begin position="54"/>
        <end position="70"/>
    </location>
</feature>
<feature type="disulfide bond">
    <location>
        <begin position="79"/>
        <end position="90"/>
    </location>
</feature>
<feature type="disulfide bond">
    <location>
        <begin position="84"/>
        <end position="97"/>
    </location>
</feature>
<feature type="disulfide bond">
    <location>
        <begin position="99"/>
        <end position="120"/>
    </location>
</feature>
<feature type="disulfide bond">
    <location>
        <begin position="105"/>
        <end position="123"/>
    </location>
</feature>
<feature type="disulfide bond">
    <location>
        <begin position="109"/>
        <end position="125"/>
    </location>
</feature>
<feature type="sequence variant" description="In isoform B.">
    <original>G</original>
    <variation>R</variation>
    <location>
        <position position="22"/>
    </location>
</feature>
<feature type="sequence variant">
    <original>G</original>
    <variation>E</variation>
    <location>
        <position position="47"/>
    </location>
</feature>
<feature type="sequence variant">
    <original>M</original>
    <variation>V</variation>
    <location>
        <position position="52"/>
    </location>
</feature>
<feature type="sequence variant">
    <original>R</original>
    <variation>I</variation>
    <location>
        <position position="71"/>
    </location>
</feature>
<feature type="helix" evidence="6">
    <location>
        <begin position="25"/>
        <end position="28"/>
    </location>
</feature>
<feature type="turn" evidence="6">
    <location>
        <begin position="38"/>
        <end position="40"/>
    </location>
</feature>
<feature type="strand" evidence="6">
    <location>
        <begin position="58"/>
        <end position="60"/>
    </location>
</feature>
<feature type="strand" evidence="6">
    <location>
        <begin position="66"/>
        <end position="70"/>
    </location>
</feature>
<feature type="helix" evidence="6">
    <location>
        <begin position="81"/>
        <end position="83"/>
    </location>
</feature>
<feature type="turn" evidence="6">
    <location>
        <begin position="92"/>
        <end position="94"/>
    </location>
</feature>
<feature type="strand" evidence="6">
    <location>
        <begin position="95"/>
        <end position="97"/>
    </location>
</feature>
<feature type="strand" evidence="6">
    <location>
        <begin position="99"/>
        <end position="101"/>
    </location>
</feature>
<feature type="strand" evidence="6">
    <location>
        <begin position="113"/>
        <end position="115"/>
    </location>
</feature>
<feature type="strand" evidence="6">
    <location>
        <begin position="121"/>
        <end position="125"/>
    </location>
</feature>